<name>CYC_ORYSJ</name>
<organism>
    <name type="scientific">Oryza sativa subsp. japonica</name>
    <name type="common">Rice</name>
    <dbReference type="NCBI Taxonomy" id="39947"/>
    <lineage>
        <taxon>Eukaryota</taxon>
        <taxon>Viridiplantae</taxon>
        <taxon>Streptophyta</taxon>
        <taxon>Embryophyta</taxon>
        <taxon>Tracheophyta</taxon>
        <taxon>Spermatophyta</taxon>
        <taxon>Magnoliopsida</taxon>
        <taxon>Liliopsida</taxon>
        <taxon>Poales</taxon>
        <taxon>Poaceae</taxon>
        <taxon>BOP clade</taxon>
        <taxon>Oryzoideae</taxon>
        <taxon>Oryzeae</taxon>
        <taxon>Oryzinae</taxon>
        <taxon>Oryza</taxon>
        <taxon>Oryza sativa</taxon>
    </lineage>
</organism>
<gene>
    <name type="primary">CC-1</name>
    <name type="ordered locus">Os05g0420600</name>
    <name type="ordered locus">LOC_Os05g34770</name>
    <name type="ORF">OsJ_017825</name>
    <name evidence="3" type="ORF">OsJ_18585</name>
    <name type="ORF">OSJNBb0092E21.3</name>
    <name type="ORF">P0426G01.18</name>
</gene>
<evidence type="ECO:0000269" key="1">
    <source>
    </source>
</evidence>
<evidence type="ECO:0000305" key="2"/>
<evidence type="ECO:0000312" key="3">
    <source>
        <dbReference type="EMBL" id="EEE63765.1"/>
    </source>
</evidence>
<evidence type="ECO:0007829" key="4">
    <source>
        <dbReference type="PDB" id="1CCR"/>
    </source>
</evidence>
<reference key="1">
    <citation type="submission" date="1992-07" db="EMBL/GenBank/DDBJ databases">
        <title>cDNA cloning and sequence analysis of rice cytochrome c gene.</title>
        <authorList>
            <person name="Nishi R."/>
            <person name="Uchimiya H."/>
            <person name="Kato A."/>
        </authorList>
    </citation>
    <scope>NUCLEOTIDE SEQUENCE [MRNA]</scope>
    <source>
        <strain>cv. Yamahoushi</strain>
    </source>
</reference>
<reference key="2">
    <citation type="journal article" date="2005" name="Mol. Genet. Genomics">
        <title>A fine physical map of the rice chromosome 5.</title>
        <authorList>
            <person name="Cheng C.-H."/>
            <person name="Chung M.C."/>
            <person name="Liu S.-M."/>
            <person name="Chen S.-K."/>
            <person name="Kao F.Y."/>
            <person name="Lin S.-J."/>
            <person name="Hsiao S.-H."/>
            <person name="Tseng I.C."/>
            <person name="Hsing Y.-I.C."/>
            <person name="Wu H.-P."/>
            <person name="Chen C.-S."/>
            <person name="Shaw J.-F."/>
            <person name="Wu J."/>
            <person name="Matsumoto T."/>
            <person name="Sasaki T."/>
            <person name="Chen H.-C."/>
            <person name="Chow T.-Y."/>
        </authorList>
    </citation>
    <scope>NUCLEOTIDE SEQUENCE [LARGE SCALE GENOMIC DNA]</scope>
    <source>
        <strain>cv. Nipponbare</strain>
    </source>
</reference>
<reference key="3">
    <citation type="journal article" date="2005" name="Nature">
        <title>The map-based sequence of the rice genome.</title>
        <authorList>
            <consortium name="International rice genome sequencing project (IRGSP)"/>
        </authorList>
    </citation>
    <scope>NUCLEOTIDE SEQUENCE [LARGE SCALE GENOMIC DNA]</scope>
    <source>
        <strain>cv. Nipponbare</strain>
    </source>
</reference>
<reference key="4">
    <citation type="journal article" date="2008" name="Nucleic Acids Res.">
        <title>The rice annotation project database (RAP-DB): 2008 update.</title>
        <authorList>
            <consortium name="The rice annotation project (RAP)"/>
        </authorList>
    </citation>
    <scope>GENOME REANNOTATION</scope>
    <source>
        <strain>cv. Nipponbare</strain>
    </source>
</reference>
<reference key="5">
    <citation type="journal article" date="2013" name="Rice">
        <title>Improvement of the Oryza sativa Nipponbare reference genome using next generation sequence and optical map data.</title>
        <authorList>
            <person name="Kawahara Y."/>
            <person name="de la Bastide M."/>
            <person name="Hamilton J.P."/>
            <person name="Kanamori H."/>
            <person name="McCombie W.R."/>
            <person name="Ouyang S."/>
            <person name="Schwartz D.C."/>
            <person name="Tanaka T."/>
            <person name="Wu J."/>
            <person name="Zhou S."/>
            <person name="Childs K.L."/>
            <person name="Davidson R.M."/>
            <person name="Lin H."/>
            <person name="Quesada-Ocampo L."/>
            <person name="Vaillancourt B."/>
            <person name="Sakai H."/>
            <person name="Lee S.S."/>
            <person name="Kim J."/>
            <person name="Numa H."/>
            <person name="Itoh T."/>
            <person name="Buell C.R."/>
            <person name="Matsumoto T."/>
        </authorList>
    </citation>
    <scope>GENOME REANNOTATION</scope>
    <source>
        <strain>cv. Nipponbare</strain>
    </source>
</reference>
<reference key="6">
    <citation type="journal article" date="2005" name="PLoS Biol.">
        <title>The genomes of Oryza sativa: a history of duplications.</title>
        <authorList>
            <person name="Yu J."/>
            <person name="Wang J."/>
            <person name="Lin W."/>
            <person name="Li S."/>
            <person name="Li H."/>
            <person name="Zhou J."/>
            <person name="Ni P."/>
            <person name="Dong W."/>
            <person name="Hu S."/>
            <person name="Zeng C."/>
            <person name="Zhang J."/>
            <person name="Zhang Y."/>
            <person name="Li R."/>
            <person name="Xu Z."/>
            <person name="Li S."/>
            <person name="Li X."/>
            <person name="Zheng H."/>
            <person name="Cong L."/>
            <person name="Lin L."/>
            <person name="Yin J."/>
            <person name="Geng J."/>
            <person name="Li G."/>
            <person name="Shi J."/>
            <person name="Liu J."/>
            <person name="Lv H."/>
            <person name="Li J."/>
            <person name="Wang J."/>
            <person name="Deng Y."/>
            <person name="Ran L."/>
            <person name="Shi X."/>
            <person name="Wang X."/>
            <person name="Wu Q."/>
            <person name="Li C."/>
            <person name="Ren X."/>
            <person name="Wang J."/>
            <person name="Wang X."/>
            <person name="Li D."/>
            <person name="Liu D."/>
            <person name="Zhang X."/>
            <person name="Ji Z."/>
            <person name="Zhao W."/>
            <person name="Sun Y."/>
            <person name="Zhang Z."/>
            <person name="Bao J."/>
            <person name="Han Y."/>
            <person name="Dong L."/>
            <person name="Ji J."/>
            <person name="Chen P."/>
            <person name="Wu S."/>
            <person name="Liu J."/>
            <person name="Xiao Y."/>
            <person name="Bu D."/>
            <person name="Tan J."/>
            <person name="Yang L."/>
            <person name="Ye C."/>
            <person name="Zhang J."/>
            <person name="Xu J."/>
            <person name="Zhou Y."/>
            <person name="Yu Y."/>
            <person name="Zhang B."/>
            <person name="Zhuang S."/>
            <person name="Wei H."/>
            <person name="Liu B."/>
            <person name="Lei M."/>
            <person name="Yu H."/>
            <person name="Li Y."/>
            <person name="Xu H."/>
            <person name="Wei S."/>
            <person name="He X."/>
            <person name="Fang L."/>
            <person name="Zhang Z."/>
            <person name="Zhang Y."/>
            <person name="Huang X."/>
            <person name="Su Z."/>
            <person name="Tong W."/>
            <person name="Li J."/>
            <person name="Tong Z."/>
            <person name="Li S."/>
            <person name="Ye J."/>
            <person name="Wang L."/>
            <person name="Fang L."/>
            <person name="Lei T."/>
            <person name="Chen C.-S."/>
            <person name="Chen H.-C."/>
            <person name="Xu Z."/>
            <person name="Li H."/>
            <person name="Huang H."/>
            <person name="Zhang F."/>
            <person name="Xu H."/>
            <person name="Li N."/>
            <person name="Zhao C."/>
            <person name="Li S."/>
            <person name="Dong L."/>
            <person name="Huang Y."/>
            <person name="Li L."/>
            <person name="Xi Y."/>
            <person name="Qi Q."/>
            <person name="Li W."/>
            <person name="Zhang B."/>
            <person name="Hu W."/>
            <person name="Zhang Y."/>
            <person name="Tian X."/>
            <person name="Jiao Y."/>
            <person name="Liang X."/>
            <person name="Jin J."/>
            <person name="Gao L."/>
            <person name="Zheng W."/>
            <person name="Hao B."/>
            <person name="Liu S.-M."/>
            <person name="Wang W."/>
            <person name="Yuan L."/>
            <person name="Cao M."/>
            <person name="McDermott J."/>
            <person name="Samudrala R."/>
            <person name="Wang J."/>
            <person name="Wong G.K.-S."/>
            <person name="Yang H."/>
        </authorList>
    </citation>
    <scope>NUCLEOTIDE SEQUENCE [LARGE SCALE GENOMIC DNA]</scope>
    <source>
        <strain>cv. Nipponbare</strain>
    </source>
</reference>
<reference key="7">
    <citation type="journal article" date="2003" name="Science">
        <title>Collection, mapping, and annotation of over 28,000 cDNA clones from japonica rice.</title>
        <authorList>
            <consortium name="The rice full-length cDNA consortium"/>
        </authorList>
    </citation>
    <scope>NUCLEOTIDE SEQUENCE [LARGE SCALE MRNA]</scope>
    <source>
        <strain>cv. Nipponbare</strain>
    </source>
</reference>
<reference key="8">
    <citation type="journal article" date="1980" name="J. Biochem.">
        <title>Amino acid sequence of cytochrome c from rice.</title>
        <authorList>
            <person name="Mori E."/>
            <person name="Morita Y."/>
        </authorList>
    </citation>
    <scope>PROTEIN SEQUENCE OF 2-112</scope>
    <scope>ACETYLATION AT ALA-2</scope>
    <scope>METHYLATION AT LYS-81 AND LYS-95</scope>
</reference>
<reference key="9">
    <citation type="journal article" date="1983" name="J. Mol. Biol.">
        <title>Structure of rice ferricytochrome c at 2.0-A resolution.</title>
        <authorList>
            <person name="Ochi H."/>
            <person name="Hata Y."/>
            <person name="Tanaka N."/>
            <person name="Kakudo M."/>
            <person name="Sakurai T."/>
            <person name="Aihara S."/>
            <person name="Morita Y."/>
        </authorList>
    </citation>
    <scope>X-RAY CRYSTALLOGRAPHY (2.0 ANGSTROMS)</scope>
</reference>
<comment type="function">
    <text>Electron carrier protein. The oxidized form of the cytochrome c heme group can accept an electron from the heme group of the cytochrome c1 subunit of cytochrome reductase. Cytochrome c then transfers this electron to the cytochrome oxidase complex, the final protein carrier in the mitochondrial electron-transport chain.</text>
</comment>
<comment type="subcellular location">
    <subcellularLocation>
        <location>Mitochondrion intermembrane space</location>
    </subcellularLocation>
    <text>Loosely associated with the inner membrane.</text>
</comment>
<comment type="PTM">
    <text>Binds 1 heme c group covalently per subunit.</text>
</comment>
<comment type="similarity">
    <text evidence="2">Belongs to the cytochrome c family.</text>
</comment>
<comment type="online information" name="Protein Spotlight">
    <link uri="https://www.proteinspotlight.org/back_issues/076"/>
    <text>Life shuttle - Issue 76 of November 2006</text>
</comment>
<dbReference type="EMBL" id="D12634">
    <property type="protein sequence ID" value="BAA02159.1"/>
    <property type="molecule type" value="mRNA"/>
</dbReference>
<dbReference type="EMBL" id="AC124836">
    <property type="protein sequence ID" value="AAT44244.1"/>
    <property type="molecule type" value="Genomic_DNA"/>
</dbReference>
<dbReference type="EMBL" id="AC137623">
    <property type="protein sequence ID" value="AAV25652.1"/>
    <property type="molecule type" value="Genomic_DNA"/>
</dbReference>
<dbReference type="EMBL" id="AP008211">
    <property type="protein sequence ID" value="BAF17492.1"/>
    <property type="molecule type" value="Genomic_DNA"/>
</dbReference>
<dbReference type="EMBL" id="AP014961">
    <property type="protein sequence ID" value="BAS94074.1"/>
    <property type="molecule type" value="Genomic_DNA"/>
</dbReference>
<dbReference type="EMBL" id="CM000142">
    <property type="protein sequence ID" value="EAZ34342.1"/>
    <property type="molecule type" value="Genomic_DNA"/>
</dbReference>
<dbReference type="EMBL" id="CM000142">
    <property type="protein sequence ID" value="EEE63765.1"/>
    <property type="molecule type" value="Genomic_DNA"/>
</dbReference>
<dbReference type="EMBL" id="AK060267">
    <property type="protein sequence ID" value="BAG87385.1"/>
    <property type="molecule type" value="mRNA"/>
</dbReference>
<dbReference type="PIR" id="JS0709">
    <property type="entry name" value="CCRZ"/>
</dbReference>
<dbReference type="RefSeq" id="XP_015640631.1">
    <property type="nucleotide sequence ID" value="XM_015785145.1"/>
</dbReference>
<dbReference type="PDB" id="1CCR">
    <property type="method" value="X-ray"/>
    <property type="resolution" value="1.50 A"/>
    <property type="chains" value="A=2-112"/>
</dbReference>
<dbReference type="PDBsum" id="1CCR"/>
<dbReference type="SMR" id="Q0DI31"/>
<dbReference type="FunCoup" id="Q0DI31">
    <property type="interactions" value="1826"/>
</dbReference>
<dbReference type="STRING" id="39947.Q0DI31"/>
<dbReference type="iPTMnet" id="Q0DI31"/>
<dbReference type="PaxDb" id="39947-Q0DI31"/>
<dbReference type="EnsemblPlants" id="Os05t0420600-01">
    <property type="protein sequence ID" value="Os05t0420600-01"/>
    <property type="gene ID" value="Os05g0420600"/>
</dbReference>
<dbReference type="Gramene" id="Os05t0420600-01">
    <property type="protein sequence ID" value="Os05t0420600-01"/>
    <property type="gene ID" value="Os05g0420600"/>
</dbReference>
<dbReference type="KEGG" id="dosa:Os05g0420600"/>
<dbReference type="eggNOG" id="KOG3453">
    <property type="taxonomic scope" value="Eukaryota"/>
</dbReference>
<dbReference type="HOGENOM" id="CLU_060944_3_0_1"/>
<dbReference type="InParanoid" id="Q0DI31"/>
<dbReference type="OMA" id="KARCAQC"/>
<dbReference type="OrthoDB" id="449280at2759"/>
<dbReference type="EvolutionaryTrace" id="Q0DI31"/>
<dbReference type="Proteomes" id="UP000000763">
    <property type="component" value="Chromosome 5"/>
</dbReference>
<dbReference type="Proteomes" id="UP000007752">
    <property type="component" value="Chromosome 5"/>
</dbReference>
<dbReference type="Proteomes" id="UP000059680">
    <property type="component" value="Chromosome 5"/>
</dbReference>
<dbReference type="GO" id="GO:0005758">
    <property type="term" value="C:mitochondrial intermembrane space"/>
    <property type="evidence" value="ECO:0000318"/>
    <property type="project" value="GO_Central"/>
</dbReference>
<dbReference type="GO" id="GO:0009055">
    <property type="term" value="F:electron transfer activity"/>
    <property type="evidence" value="ECO:0000318"/>
    <property type="project" value="GO_Central"/>
</dbReference>
<dbReference type="GO" id="GO:0020037">
    <property type="term" value="F:heme binding"/>
    <property type="evidence" value="ECO:0007669"/>
    <property type="project" value="InterPro"/>
</dbReference>
<dbReference type="GO" id="GO:0046872">
    <property type="term" value="F:metal ion binding"/>
    <property type="evidence" value="ECO:0007669"/>
    <property type="project" value="UniProtKB-KW"/>
</dbReference>
<dbReference type="GO" id="GO:0006123">
    <property type="term" value="P:mitochondrial electron transport, cytochrome c to oxygen"/>
    <property type="evidence" value="ECO:0000318"/>
    <property type="project" value="GO_Central"/>
</dbReference>
<dbReference type="GO" id="GO:0006122">
    <property type="term" value="P:mitochondrial electron transport, ubiquinol to cytochrome c"/>
    <property type="evidence" value="ECO:0000318"/>
    <property type="project" value="GO_Central"/>
</dbReference>
<dbReference type="FunFam" id="1.10.760.10:FF:000001">
    <property type="entry name" value="Cytochrome c iso-1"/>
    <property type="match status" value="1"/>
</dbReference>
<dbReference type="Gene3D" id="1.10.760.10">
    <property type="entry name" value="Cytochrome c-like domain"/>
    <property type="match status" value="1"/>
</dbReference>
<dbReference type="InterPro" id="IPR009056">
    <property type="entry name" value="Cyt_c-like_dom"/>
</dbReference>
<dbReference type="InterPro" id="IPR036909">
    <property type="entry name" value="Cyt_c-like_dom_sf"/>
</dbReference>
<dbReference type="InterPro" id="IPR002327">
    <property type="entry name" value="Cyt_c_1A/1B"/>
</dbReference>
<dbReference type="PANTHER" id="PTHR11961">
    <property type="entry name" value="CYTOCHROME C"/>
    <property type="match status" value="1"/>
</dbReference>
<dbReference type="Pfam" id="PF00034">
    <property type="entry name" value="Cytochrom_C"/>
    <property type="match status" value="1"/>
</dbReference>
<dbReference type="PRINTS" id="PR00604">
    <property type="entry name" value="CYTCHRMECIAB"/>
</dbReference>
<dbReference type="SUPFAM" id="SSF46626">
    <property type="entry name" value="Cytochrome c"/>
    <property type="match status" value="1"/>
</dbReference>
<dbReference type="PROSITE" id="PS51007">
    <property type="entry name" value="CYTC"/>
    <property type="match status" value="1"/>
</dbReference>
<proteinExistence type="evidence at protein level"/>
<protein>
    <recommendedName>
        <fullName>Cytochrome c</fullName>
    </recommendedName>
</protein>
<sequence length="112" mass="12271">MASFSEAPPGNPKAGEKIFKTKCAQCHTVDKGAGHKQGPNLNGLFGRQSGTTPGYSYSTANKNMAVIWEENTLYDYLLNPKKYIPGTKMVFPGLKKPQERADLISYLKEATS</sequence>
<feature type="initiator methionine" description="Removed" evidence="1">
    <location>
        <position position="1"/>
    </location>
</feature>
<feature type="chain" id="PRO_0000108303" description="Cytochrome c">
    <location>
        <begin position="2"/>
        <end position="112"/>
    </location>
</feature>
<feature type="binding site" description="covalent">
    <location>
        <position position="23"/>
    </location>
    <ligand>
        <name>heme c</name>
        <dbReference type="ChEBI" id="CHEBI:61717"/>
    </ligand>
</feature>
<feature type="binding site" description="covalent">
    <location>
        <position position="26"/>
    </location>
    <ligand>
        <name>heme c</name>
        <dbReference type="ChEBI" id="CHEBI:61717"/>
    </ligand>
</feature>
<feature type="binding site" description="axial binding residue">
    <location>
        <position position="27"/>
    </location>
    <ligand>
        <name>heme c</name>
        <dbReference type="ChEBI" id="CHEBI:61717"/>
    </ligand>
    <ligandPart>
        <name>Fe</name>
        <dbReference type="ChEBI" id="CHEBI:18248"/>
    </ligandPart>
</feature>
<feature type="binding site" description="axial binding residue">
    <location>
        <position position="89"/>
    </location>
    <ligand>
        <name>heme c</name>
        <dbReference type="ChEBI" id="CHEBI:61717"/>
    </ligand>
    <ligandPart>
        <name>Fe</name>
        <dbReference type="ChEBI" id="CHEBI:18248"/>
    </ligandPart>
</feature>
<feature type="modified residue" description="N-acetylalanine" evidence="1">
    <location>
        <position position="2"/>
    </location>
</feature>
<feature type="modified residue" description="N6,N6,N6-trimethyllysine" evidence="1">
    <location>
        <position position="81"/>
    </location>
</feature>
<feature type="modified residue" description="N6,N6,N6-trimethyllysine" evidence="1">
    <location>
        <position position="95"/>
    </location>
</feature>
<feature type="helix" evidence="4">
    <location>
        <begin position="4"/>
        <end position="6"/>
    </location>
</feature>
<feature type="helix" evidence="4">
    <location>
        <begin position="12"/>
        <end position="22"/>
    </location>
</feature>
<feature type="turn" evidence="4">
    <location>
        <begin position="23"/>
        <end position="26"/>
    </location>
</feature>
<feature type="strand" evidence="4">
    <location>
        <begin position="36"/>
        <end position="38"/>
    </location>
</feature>
<feature type="helix" evidence="4">
    <location>
        <begin position="59"/>
        <end position="64"/>
    </location>
</feature>
<feature type="helix" evidence="4">
    <location>
        <begin position="70"/>
        <end position="78"/>
    </location>
</feature>
<feature type="helix" evidence="4">
    <location>
        <begin position="80"/>
        <end position="83"/>
    </location>
</feature>
<feature type="helix" evidence="4">
    <location>
        <begin position="97"/>
        <end position="110"/>
    </location>
</feature>
<keyword id="KW-0002">3D-structure</keyword>
<keyword id="KW-0007">Acetylation</keyword>
<keyword id="KW-0903">Direct protein sequencing</keyword>
<keyword id="KW-0249">Electron transport</keyword>
<keyword id="KW-0349">Heme</keyword>
<keyword id="KW-0408">Iron</keyword>
<keyword id="KW-0479">Metal-binding</keyword>
<keyword id="KW-0488">Methylation</keyword>
<keyword id="KW-0496">Mitochondrion</keyword>
<keyword id="KW-1185">Reference proteome</keyword>
<keyword id="KW-0679">Respiratory chain</keyword>
<keyword id="KW-0813">Transport</keyword>
<accession>Q0DI31</accession>
<accession>B7E4T8</accession>
<accession>P00055</accession>
<accession>Q6L4Z1</accession>